<proteinExistence type="inferred from homology"/>
<name>AROB_STRA3</name>
<reference key="1">
    <citation type="journal article" date="2002" name="Mol. Microbiol.">
        <title>Genome sequence of Streptococcus agalactiae, a pathogen causing invasive neonatal disease.</title>
        <authorList>
            <person name="Glaser P."/>
            <person name="Rusniok C."/>
            <person name="Buchrieser C."/>
            <person name="Chevalier F."/>
            <person name="Frangeul L."/>
            <person name="Msadek T."/>
            <person name="Zouine M."/>
            <person name="Couve E."/>
            <person name="Lalioui L."/>
            <person name="Poyart C."/>
            <person name="Trieu-Cuot P."/>
            <person name="Kunst F."/>
        </authorList>
    </citation>
    <scope>NUCLEOTIDE SEQUENCE [LARGE SCALE GENOMIC DNA]</scope>
    <source>
        <strain>NEM316</strain>
    </source>
</reference>
<evidence type="ECO:0000255" key="1">
    <source>
        <dbReference type="HAMAP-Rule" id="MF_00110"/>
    </source>
</evidence>
<comment type="function">
    <text evidence="1">Catalyzes the conversion of 3-deoxy-D-arabino-heptulosonate 7-phosphate (DAHP) to dehydroquinate (DHQ).</text>
</comment>
<comment type="catalytic activity">
    <reaction evidence="1">
        <text>7-phospho-2-dehydro-3-deoxy-D-arabino-heptonate = 3-dehydroquinate + phosphate</text>
        <dbReference type="Rhea" id="RHEA:21968"/>
        <dbReference type="ChEBI" id="CHEBI:32364"/>
        <dbReference type="ChEBI" id="CHEBI:43474"/>
        <dbReference type="ChEBI" id="CHEBI:58394"/>
        <dbReference type="EC" id="4.2.3.4"/>
    </reaction>
</comment>
<comment type="cofactor">
    <cofactor evidence="1">
        <name>NAD(+)</name>
        <dbReference type="ChEBI" id="CHEBI:57540"/>
    </cofactor>
</comment>
<comment type="cofactor">
    <cofactor evidence="1">
        <name>Co(2+)</name>
        <dbReference type="ChEBI" id="CHEBI:48828"/>
    </cofactor>
    <cofactor evidence="1">
        <name>Zn(2+)</name>
        <dbReference type="ChEBI" id="CHEBI:29105"/>
    </cofactor>
    <text evidence="1">Binds 1 divalent metal cation per subunit. Can use either Co(2+) or Zn(2+).</text>
</comment>
<comment type="pathway">
    <text evidence="1">Metabolic intermediate biosynthesis; chorismate biosynthesis; chorismate from D-erythrose 4-phosphate and phosphoenolpyruvate: step 2/7.</text>
</comment>
<comment type="subcellular location">
    <subcellularLocation>
        <location evidence="1">Cytoplasm</location>
    </subcellularLocation>
</comment>
<comment type="similarity">
    <text evidence="1">Belongs to the sugar phosphate cyclases superfamily. Dehydroquinate synthase family.</text>
</comment>
<feature type="chain" id="PRO_0000140787" description="3-dehydroquinate synthase">
    <location>
        <begin position="1"/>
        <end position="355"/>
    </location>
</feature>
<feature type="binding site" evidence="1">
    <location>
        <begin position="105"/>
        <end position="109"/>
    </location>
    <ligand>
        <name>NAD(+)</name>
        <dbReference type="ChEBI" id="CHEBI:57540"/>
    </ligand>
</feature>
<feature type="binding site" evidence="1">
    <location>
        <begin position="129"/>
        <end position="130"/>
    </location>
    <ligand>
        <name>NAD(+)</name>
        <dbReference type="ChEBI" id="CHEBI:57540"/>
    </ligand>
</feature>
<feature type="binding site" evidence="1">
    <location>
        <position position="142"/>
    </location>
    <ligand>
        <name>NAD(+)</name>
        <dbReference type="ChEBI" id="CHEBI:57540"/>
    </ligand>
</feature>
<feature type="binding site" evidence="1">
    <location>
        <position position="151"/>
    </location>
    <ligand>
        <name>NAD(+)</name>
        <dbReference type="ChEBI" id="CHEBI:57540"/>
    </ligand>
</feature>
<feature type="binding site" evidence="1">
    <location>
        <begin position="169"/>
        <end position="172"/>
    </location>
    <ligand>
        <name>NAD(+)</name>
        <dbReference type="ChEBI" id="CHEBI:57540"/>
    </ligand>
</feature>
<feature type="binding site" evidence="1">
    <location>
        <position position="184"/>
    </location>
    <ligand>
        <name>Zn(2+)</name>
        <dbReference type="ChEBI" id="CHEBI:29105"/>
    </ligand>
</feature>
<feature type="binding site" evidence="1">
    <location>
        <position position="246"/>
    </location>
    <ligand>
        <name>Zn(2+)</name>
        <dbReference type="ChEBI" id="CHEBI:29105"/>
    </ligand>
</feature>
<feature type="binding site" evidence="1">
    <location>
        <position position="263"/>
    </location>
    <ligand>
        <name>Zn(2+)</name>
        <dbReference type="ChEBI" id="CHEBI:29105"/>
    </ligand>
</feature>
<dbReference type="EC" id="4.2.3.4" evidence="1"/>
<dbReference type="EMBL" id="AL766850">
    <property type="protein sequence ID" value="CAD47107.1"/>
    <property type="molecule type" value="Genomic_DNA"/>
</dbReference>
<dbReference type="RefSeq" id="WP_001195736.1">
    <property type="nucleotide sequence ID" value="NC_004368.1"/>
</dbReference>
<dbReference type="SMR" id="Q8E4F3"/>
<dbReference type="KEGG" id="san:aroB"/>
<dbReference type="eggNOG" id="COG0337">
    <property type="taxonomic scope" value="Bacteria"/>
</dbReference>
<dbReference type="HOGENOM" id="CLU_001201_0_1_9"/>
<dbReference type="UniPathway" id="UPA00053">
    <property type="reaction ID" value="UER00085"/>
</dbReference>
<dbReference type="Proteomes" id="UP000000823">
    <property type="component" value="Chromosome"/>
</dbReference>
<dbReference type="GO" id="GO:0005737">
    <property type="term" value="C:cytoplasm"/>
    <property type="evidence" value="ECO:0007669"/>
    <property type="project" value="UniProtKB-SubCell"/>
</dbReference>
<dbReference type="GO" id="GO:0003856">
    <property type="term" value="F:3-dehydroquinate synthase activity"/>
    <property type="evidence" value="ECO:0007669"/>
    <property type="project" value="UniProtKB-UniRule"/>
</dbReference>
<dbReference type="GO" id="GO:0046872">
    <property type="term" value="F:metal ion binding"/>
    <property type="evidence" value="ECO:0007669"/>
    <property type="project" value="UniProtKB-KW"/>
</dbReference>
<dbReference type="GO" id="GO:0000166">
    <property type="term" value="F:nucleotide binding"/>
    <property type="evidence" value="ECO:0007669"/>
    <property type="project" value="UniProtKB-KW"/>
</dbReference>
<dbReference type="GO" id="GO:0008652">
    <property type="term" value="P:amino acid biosynthetic process"/>
    <property type="evidence" value="ECO:0007669"/>
    <property type="project" value="UniProtKB-KW"/>
</dbReference>
<dbReference type="GO" id="GO:0009073">
    <property type="term" value="P:aromatic amino acid family biosynthetic process"/>
    <property type="evidence" value="ECO:0007669"/>
    <property type="project" value="UniProtKB-KW"/>
</dbReference>
<dbReference type="GO" id="GO:0009423">
    <property type="term" value="P:chorismate biosynthetic process"/>
    <property type="evidence" value="ECO:0007669"/>
    <property type="project" value="UniProtKB-UniRule"/>
</dbReference>
<dbReference type="CDD" id="cd08195">
    <property type="entry name" value="DHQS"/>
    <property type="match status" value="1"/>
</dbReference>
<dbReference type="FunFam" id="3.40.50.1970:FF:000007">
    <property type="entry name" value="Pentafunctional AROM polypeptide"/>
    <property type="match status" value="1"/>
</dbReference>
<dbReference type="Gene3D" id="3.40.50.1970">
    <property type="match status" value="1"/>
</dbReference>
<dbReference type="Gene3D" id="1.20.1090.10">
    <property type="entry name" value="Dehydroquinate synthase-like - alpha domain"/>
    <property type="match status" value="1"/>
</dbReference>
<dbReference type="HAMAP" id="MF_00110">
    <property type="entry name" value="DHQ_synthase"/>
    <property type="match status" value="1"/>
</dbReference>
<dbReference type="InterPro" id="IPR050071">
    <property type="entry name" value="Dehydroquinate_synthase"/>
</dbReference>
<dbReference type="InterPro" id="IPR016037">
    <property type="entry name" value="DHQ_synth_AroB"/>
</dbReference>
<dbReference type="InterPro" id="IPR030963">
    <property type="entry name" value="DHQ_synth_fam"/>
</dbReference>
<dbReference type="InterPro" id="IPR030960">
    <property type="entry name" value="DHQS/DOIS_N"/>
</dbReference>
<dbReference type="InterPro" id="IPR056179">
    <property type="entry name" value="DHQS_C"/>
</dbReference>
<dbReference type="NCBIfam" id="TIGR01357">
    <property type="entry name" value="aroB"/>
    <property type="match status" value="1"/>
</dbReference>
<dbReference type="PANTHER" id="PTHR43622">
    <property type="entry name" value="3-DEHYDROQUINATE SYNTHASE"/>
    <property type="match status" value="1"/>
</dbReference>
<dbReference type="PANTHER" id="PTHR43622:SF7">
    <property type="entry name" value="3-DEHYDROQUINATE SYNTHASE, CHLOROPLASTIC"/>
    <property type="match status" value="1"/>
</dbReference>
<dbReference type="Pfam" id="PF01761">
    <property type="entry name" value="DHQ_synthase"/>
    <property type="match status" value="1"/>
</dbReference>
<dbReference type="Pfam" id="PF24621">
    <property type="entry name" value="DHQS_C"/>
    <property type="match status" value="1"/>
</dbReference>
<dbReference type="PIRSF" id="PIRSF001455">
    <property type="entry name" value="DHQ_synth"/>
    <property type="match status" value="1"/>
</dbReference>
<dbReference type="SUPFAM" id="SSF56796">
    <property type="entry name" value="Dehydroquinate synthase-like"/>
    <property type="match status" value="1"/>
</dbReference>
<gene>
    <name evidence="1" type="primary">aroB</name>
    <name type="ordered locus">gbs1448</name>
</gene>
<accession>Q8E4F3</accession>
<sequence length="355" mass="39356">MQVEVDLPNHSYHIKIEEGCFSEAGDWVSHLWQKQMITIITDSNVEILYGESLVNQLKKQGFTVHVFSFAAGEASKTLEVANRIYGFLAKHHMTRSDGIIALGGGVVGDLAAFVASTYMRGIHFLQIPTSLTAQVDSSIGGKTGVNTSFAKNMVGTFAQPDGVLIDPVTLKTLGNRELVEGMGEVIKYGLIDDIKLWHILEEMDGTIDSILDSALAIIYHSCQVKRKHVLADQYDKGLRMHLNFGHTIGHAIEVHAGYGEIMHGEAVAIGMIQLSRVAERKNLMPRGISQDIYNMCLKFGLPVHYAEWDKDVLFDILSHDKKASGQFIKIVILPQLGSATVHQIPLEEMRDYLEK</sequence>
<protein>
    <recommendedName>
        <fullName evidence="1">3-dehydroquinate synthase</fullName>
        <shortName evidence="1">DHQS</shortName>
        <ecNumber evidence="1">4.2.3.4</ecNumber>
    </recommendedName>
</protein>
<keyword id="KW-0028">Amino-acid biosynthesis</keyword>
<keyword id="KW-0057">Aromatic amino acid biosynthesis</keyword>
<keyword id="KW-0170">Cobalt</keyword>
<keyword id="KW-0963">Cytoplasm</keyword>
<keyword id="KW-0456">Lyase</keyword>
<keyword id="KW-0479">Metal-binding</keyword>
<keyword id="KW-0520">NAD</keyword>
<keyword id="KW-0547">Nucleotide-binding</keyword>
<keyword id="KW-0862">Zinc</keyword>
<organism>
    <name type="scientific">Streptococcus agalactiae serotype III (strain NEM316)</name>
    <dbReference type="NCBI Taxonomy" id="211110"/>
    <lineage>
        <taxon>Bacteria</taxon>
        <taxon>Bacillati</taxon>
        <taxon>Bacillota</taxon>
        <taxon>Bacilli</taxon>
        <taxon>Lactobacillales</taxon>
        <taxon>Streptococcaceae</taxon>
        <taxon>Streptococcus</taxon>
    </lineage>
</organism>